<feature type="signal peptide" evidence="3">
    <location>
        <begin position="1"/>
        <end position="27"/>
    </location>
</feature>
<feature type="chain" id="PRO_0000055631" description="Multiple epidermal growth factor-like domains protein 8">
    <location>
        <begin position="28"/>
        <end position="2788"/>
    </location>
</feature>
<feature type="topological domain" description="Extracellular" evidence="3">
    <location>
        <begin position="28"/>
        <end position="2590"/>
    </location>
</feature>
<feature type="transmembrane region" description="Helical" evidence="3">
    <location>
        <begin position="2591"/>
        <end position="2611"/>
    </location>
</feature>
<feature type="topological domain" description="Cytoplasmic" evidence="3">
    <location>
        <begin position="2612"/>
        <end position="2788"/>
    </location>
</feature>
<feature type="domain" description="CUB 1" evidence="4">
    <location>
        <begin position="30"/>
        <end position="140"/>
    </location>
</feature>
<feature type="domain" description="EGF-like 1" evidence="5">
    <location>
        <begin position="138"/>
        <end position="168"/>
    </location>
</feature>
<feature type="domain" description="EGF-like 2" evidence="5">
    <location>
        <begin position="170"/>
        <end position="203"/>
    </location>
</feature>
<feature type="repeat" description="Kelch 1">
    <location>
        <begin position="241"/>
        <end position="287"/>
    </location>
</feature>
<feature type="repeat" description="Kelch 2">
    <location>
        <begin position="290"/>
        <end position="338"/>
    </location>
</feature>
<feature type="repeat" description="Kelch 3">
    <location>
        <begin position="346"/>
        <end position="399"/>
    </location>
</feature>
<feature type="repeat" description="Kelch 4">
    <location>
        <begin position="402"/>
        <end position="453"/>
    </location>
</feature>
<feature type="repeat" description="Kelch 5">
    <location>
        <begin position="459"/>
        <end position="511"/>
    </location>
</feature>
<feature type="repeat" description="Kelch 6">
    <location>
        <begin position="525"/>
        <end position="575"/>
    </location>
</feature>
<feature type="domain" description="PSI 1">
    <location>
        <begin position="561"/>
        <end position="613"/>
    </location>
</feature>
<feature type="domain" description="PSI 2">
    <location>
        <begin position="847"/>
        <end position="899"/>
    </location>
</feature>
<feature type="domain" description="PSI 3">
    <location>
        <begin position="900"/>
        <end position="947"/>
    </location>
</feature>
<feature type="domain" description="EGF-like 3; calcium-binding" evidence="5">
    <location>
        <begin position="1074"/>
        <end position="1115"/>
    </location>
</feature>
<feature type="domain" description="Laminin EGF-like 1" evidence="6">
    <location>
        <begin position="1163"/>
        <end position="1210"/>
    </location>
</feature>
<feature type="domain" description="Laminin EGF-like 2" evidence="6">
    <location>
        <begin position="1211"/>
        <end position="1261"/>
    </location>
</feature>
<feature type="domain" description="CUB 2" evidence="4">
    <location>
        <begin position="1263"/>
        <end position="1405"/>
    </location>
</feature>
<feature type="domain" description="EGF-like 4" evidence="5">
    <location>
        <begin position="1403"/>
        <end position="1445"/>
    </location>
</feature>
<feature type="repeat" description="Kelch 7">
    <location>
        <begin position="1522"/>
        <end position="1570"/>
    </location>
</feature>
<feature type="repeat" description="Kelch 8">
    <location>
        <begin position="1580"/>
        <end position="1626"/>
    </location>
</feature>
<feature type="repeat" description="Kelch 9">
    <location>
        <begin position="1632"/>
        <end position="1678"/>
    </location>
</feature>
<feature type="repeat" description="Kelch 10">
    <location>
        <begin position="1684"/>
        <end position="1734"/>
    </location>
</feature>
<feature type="repeat" description="Kelch 11">
    <location>
        <begin position="1739"/>
        <end position="1786"/>
    </location>
</feature>
<feature type="repeat" description="Kelch 12">
    <location>
        <begin position="1795"/>
        <end position="1840"/>
    </location>
</feature>
<feature type="domain" description="PSI 4">
    <location>
        <begin position="1819"/>
        <end position="1859"/>
    </location>
</feature>
<feature type="domain" description="PSI 5">
    <location>
        <begin position="1867"/>
        <end position="1922"/>
    </location>
</feature>
<feature type="domain" description="PSI 6">
    <location>
        <begin position="2003"/>
        <end position="2061"/>
    </location>
</feature>
<feature type="domain" description="PSI 7">
    <location>
        <begin position="2063"/>
        <end position="2120"/>
    </location>
</feature>
<feature type="domain" description="EGF-like 5" evidence="5">
    <location>
        <begin position="2121"/>
        <end position="2159"/>
    </location>
</feature>
<feature type="domain" description="Laminin EGF-like 3" evidence="6">
    <location>
        <begin position="2196"/>
        <end position="2244"/>
    </location>
</feature>
<feature type="domain" description="Laminin EGF-like 4" evidence="6">
    <location>
        <begin position="2323"/>
        <end position="2386"/>
    </location>
</feature>
<feature type="region of interest" description="Disordered" evidence="7">
    <location>
        <begin position="2465"/>
        <end position="2507"/>
    </location>
</feature>
<feature type="region of interest" description="Disordered" evidence="7">
    <location>
        <begin position="2761"/>
        <end position="2788"/>
    </location>
</feature>
<feature type="compositionally biased region" description="Pro residues" evidence="7">
    <location>
        <begin position="2470"/>
        <end position="2483"/>
    </location>
</feature>
<feature type="compositionally biased region" description="Gly residues" evidence="7">
    <location>
        <begin position="2761"/>
        <end position="2775"/>
    </location>
</feature>
<feature type="compositionally biased region" description="Polar residues" evidence="7">
    <location>
        <begin position="2779"/>
        <end position="2788"/>
    </location>
</feature>
<feature type="modified residue" description="Phosphothreonine" evidence="10">
    <location>
        <position position="1353"/>
    </location>
</feature>
<feature type="glycosylation site" description="N-linked (GlcNAc...) asparagine" evidence="3">
    <location>
        <position position="50"/>
    </location>
</feature>
<feature type="glycosylation site" description="N-linked (GlcNAc...) asparagine" evidence="3">
    <location>
        <position position="1048"/>
    </location>
</feature>
<feature type="glycosylation site" description="N-linked (GlcNAc...) asparagine" evidence="3">
    <location>
        <position position="1271"/>
    </location>
</feature>
<feature type="glycosylation site" description="N-linked (GlcNAc...) asparagine" evidence="3">
    <location>
        <position position="2009"/>
    </location>
</feature>
<feature type="glycosylation site" description="N-linked (GlcNAc...) asparagine" evidence="3">
    <location>
        <position position="2157"/>
    </location>
</feature>
<feature type="glycosylation site" description="N-linked (GlcNAc...) asparagine" evidence="3">
    <location>
        <position position="2172"/>
    </location>
</feature>
<feature type="disulfide bond" evidence="1">
    <location>
        <begin position="30"/>
        <end position="57"/>
    </location>
</feature>
<feature type="disulfide bond" evidence="1">
    <location>
        <begin position="142"/>
        <end position="152"/>
    </location>
</feature>
<feature type="disulfide bond" evidence="1">
    <location>
        <begin position="146"/>
        <end position="158"/>
    </location>
</feature>
<feature type="disulfide bond" evidence="1">
    <location>
        <begin position="174"/>
        <end position="184"/>
    </location>
</feature>
<feature type="disulfide bond" evidence="1">
    <location>
        <begin position="178"/>
        <end position="191"/>
    </location>
</feature>
<feature type="disulfide bond" evidence="1">
    <location>
        <begin position="193"/>
        <end position="202"/>
    </location>
</feature>
<feature type="disulfide bond" evidence="1">
    <location>
        <begin position="1078"/>
        <end position="1091"/>
    </location>
</feature>
<feature type="disulfide bond" evidence="1">
    <location>
        <begin position="1085"/>
        <end position="1100"/>
    </location>
</feature>
<feature type="disulfide bond" evidence="1">
    <location>
        <begin position="1102"/>
        <end position="1114"/>
    </location>
</feature>
<feature type="disulfide bond" evidence="1">
    <location>
        <begin position="1163"/>
        <end position="1171"/>
    </location>
</feature>
<feature type="disulfide bond" evidence="1">
    <location>
        <begin position="1165"/>
        <end position="1179"/>
    </location>
</feature>
<feature type="disulfide bond" evidence="1">
    <location>
        <begin position="1182"/>
        <end position="1191"/>
    </location>
</feature>
<feature type="disulfide bond" evidence="1">
    <location>
        <begin position="1194"/>
        <end position="1208"/>
    </location>
</feature>
<feature type="disulfide bond" evidence="1">
    <location>
        <begin position="1211"/>
        <end position="1224"/>
    </location>
</feature>
<feature type="disulfide bond" evidence="1">
    <location>
        <begin position="1213"/>
        <end position="1231"/>
    </location>
</feature>
<feature type="disulfide bond" evidence="1">
    <location>
        <begin position="1233"/>
        <end position="1242"/>
    </location>
</feature>
<feature type="disulfide bond" evidence="1">
    <location>
        <begin position="1245"/>
        <end position="1259"/>
    </location>
</feature>
<feature type="disulfide bond" evidence="1">
    <location>
        <begin position="1263"/>
        <end position="1302"/>
    </location>
</feature>
<feature type="disulfide bond" evidence="1">
    <location>
        <begin position="1336"/>
        <end position="1367"/>
    </location>
</feature>
<feature type="disulfide bond" evidence="1">
    <location>
        <begin position="1407"/>
        <end position="1421"/>
    </location>
</feature>
<feature type="disulfide bond" evidence="1">
    <location>
        <begin position="1415"/>
        <end position="1433"/>
    </location>
</feature>
<feature type="disulfide bond" evidence="1">
    <location>
        <begin position="1435"/>
        <end position="1444"/>
    </location>
</feature>
<feature type="disulfide bond" evidence="1">
    <location>
        <begin position="2125"/>
        <end position="2138"/>
    </location>
</feature>
<feature type="disulfide bond" evidence="1">
    <location>
        <begin position="2132"/>
        <end position="2147"/>
    </location>
</feature>
<feature type="disulfide bond" evidence="1">
    <location>
        <begin position="2196"/>
        <end position="2204"/>
    </location>
</feature>
<feature type="disulfide bond" evidence="1">
    <location>
        <begin position="2198"/>
        <end position="2213"/>
    </location>
</feature>
<feature type="disulfide bond" evidence="1">
    <location>
        <begin position="2216"/>
        <end position="2225"/>
    </location>
</feature>
<feature type="disulfide bond" evidence="1">
    <location>
        <begin position="2228"/>
        <end position="2242"/>
    </location>
</feature>
<sequence>MALGGALAAALALAFAVLGPLSHKVLAGDCKGQRQVLREAPGFVTDGAGNYSVNGNCEWLIEAPSPQHRILLDFLFLDTECTYDYLFVYDGDSPQGPLLASLSGSTRPPPIEASSGKMLLHLFSDANYNLLGFNASFRFSLCPGGCQNHGQCKSPGVCVCEPGWGGPDCGLQECSAYCGSHGTCASTLGPCRCEPGFLGRACDLHLWENQGAGWWHSVSAGDPAFSARVGAAGAFLSPPGLLAVFGGQDLNKALGDLVLYNFSTNTWESWDLTPAPAARHSHVAVAWAGFLVLMGGELANGLLTNDVWAFSPLGGGHWELLAPPASSSSGPPGLAGHAAALVDDIWLYVSGGRTQHDLFSSGLFRFRLDHTSRGYWEQVIPAGGRPPAATGHSMVFHAPSRTLLVHGGHRPSTARFSVRVNSTELFHVDRRVWTTLKGRDGLQGPRERAFHTASVLGNYMVVYGGNVHTHYQEEKCYEDGIFFYHLGCHQWVSGAELAPPGTPEGRAAPPSGRYSHVAAVLGGSVLLVAGGYSGRPRGDLMAYKVPPFVFQAPALDYHLDYCSMYTDHSVCSRDPECSWCQGACQSAPPPGTPSGACPAASCLGLGRLLSDCQACLAFSSPTAPPRGPGTLGWCVHNESCLPRPEQARCRGEQISGTVGWWGPAPVFVTSLEACVTQSFLPGLHLLTFQQPPNASQPDKVSIVRSTTITLTPSAETDVSLVYRGFIYPMLPGGPGGPGAEDVAVWARAQRLHVLARMARGPDTENMEEVGRWVAQQEKETRRLQRPGSSRLFPLPGRGNKYAVEIRGQLNGSAGPGHSELTLLWDRTGVPGGSEISFFFLEPYRSLACSSYSSCLGCLADQGCGWCLNSATCHLRQGRAHCEDDGNGESLLVLVPALCPLCEEHRDCHACTQDPFCEWHQSTNRKGDAACSRRGRGRGALKNPEECPPLCSQRLTCEDCLANSSQCAWCQSTHTCFLFAAYLARYPHGGCRGWDDSVHSEPRCRSCHGFLTCHECLQSHECGWCGNEDNPTLGRCLQGDFSGPLGGGNCSLWVGEGLGLPVALPARWAYARCPDVDECRLGLARCHPRATCLNTPLSYECHCQRGYQGDGITHCNRTCLEDCGHGVCSGPPDFTCVCDLGWTSDLPPPTPAPGPPAPRCSRDCGCNFHSHCRRRGPGYCDECQDWTWGEHCERCRPGSFGNATGSGGCRPCQCNGHGDPRRGHCDNLSGLCFCQDHTEGAHCQICSPGYYGDPRAGGSCFRECGGRALLTNVSSVALGSRRFGGLLPPGGGTARAGPGLSYCVWVVSATEALQPCAPGTLCPPLTLTFSPDSSTPCTLSYVLAFDGFPRFLDTGVVQSDRSLIAAFCGQRRDRPLTVQALSGLLVLHWEANGSSSWGFNASVGSARCGSGGPGSCPVPQECVPQDGAAGAGLCRCPQGWAGPHCRMALCPENCNAHTGAGICNQSLGVCICAEGFGGPDCATKLDGGQLVWETLMDSRLSADTASRFLHRLGHTMVEGPDATLWMFGGLGLPQGLLGNLYRYSVSERRWTQMLAGAEDGGPGPSPRSFHAAAYVPAGRGAMYLLGGLTAGGITCDFWVLNLTTLQWRQEKAPQSIELPAVAGHTLTARRGLSLLLVGGYSPENGFNQQLLEYQLATTWVSGAQSGTPPTGLYGHSAVYHEATDSLYVFGGFRFHVELAAPSPELYSLHCPDRTWSLLAPSQGAKPRPRLFHASALLGDTMVVLGGRSDPDEFSSDVLLYQVNCNTWLLPDLTRPAFVGSPMEESVAHAVAAVGSRLYISGGFGGVALGRLLALTLPPDPCRLLPSPEACNQSGACTWCHGACLSGDQAHRLGCGVPPCSPMPRSPEECRRLRTCSECLARHPRTLQPGDGEASVPRCKWCTNCPEGACIGRNGSCTSENDCRINQREVFWAGNCSEAACGAADCEQCTREGKCMWTRQFKRTGETRRILSVQPTYDWTCFSHSLLNVSPMPVESSPPLPCPTPCHLLPNCTSCLASKGADGGWQHCVWSSSLQQCLSPSYLPLRCMAGGCGRLLRGPESCSLGCAQATQCALCLRRPHCGWCAWGGQDGGGHCMEGGLSGPRDGLTCGRPGASWAFLSCPPEDECANGHHDCNETQNCHDQPHGYECSCKTGYTMDNVTGVCRPVCAQGCVNGSCVEPDHCRCHFGFVGRNCSTECRCNRHSECAGVGARDHCLLCRNHTKGSHCEQCLPLFVGSALGGGTCRPCHAFCRGNSHVCVSRKELEMARREPEKYSLDPEEIEAWVAEGPSEDEAVCVNCQNNSYGDRCESCLHGYFLLDGKCTKCQCNGHADTCNEQDGTGCPCQNNTETGVCQGSSPSDRRDCYKYQCAKCRESFHGSPLGGQQCYRLISVEQECCLDPTSQTNCFHEPKRRALGPGRTVLFGVQPKFTNVDIRLTLDVTFGAVDLYVSTSYDTFVVRVAPDTGVHTVHIQPPPPPPPPPPPADGVPRVASDLGGLGTGSGSGSPVEPRVREVWPRGLITYVTVTEPSAVLVVRSVRDRLVITYPHEHHALKSSRFYLLLLGVGDPNGPGANGSADSQGLLFFRQDQAHIDLFVFFSVFFSCFFLFLSLCVLLWKAKQALDQRQEQRRHLQEMTKMASRPFAKVTVCFPPDPAGPAPAWKPAGLPPPAFRRSEPFLAPLLLTGAGGPWGPMGGGCCPPALPATTAGLRAGPITLEPTEDGMAGVATLLLQLPGGPHAPNGACLGSALVTLRHRLHEYCGGSGGAGGSGHGGGGGRKGLLSQDNLTSMSL</sequence>
<reference key="1">
    <citation type="journal article" date="2004" name="Nature">
        <title>Genome sequence of the Brown Norway rat yields insights into mammalian evolution.</title>
        <authorList>
            <person name="Gibbs R.A."/>
            <person name="Weinstock G.M."/>
            <person name="Metzker M.L."/>
            <person name="Muzny D.M."/>
            <person name="Sodergren E.J."/>
            <person name="Scherer S."/>
            <person name="Scott G."/>
            <person name="Steffen D."/>
            <person name="Worley K.C."/>
            <person name="Burch P.E."/>
            <person name="Okwuonu G."/>
            <person name="Hines S."/>
            <person name="Lewis L."/>
            <person name="Deramo C."/>
            <person name="Delgado O."/>
            <person name="Dugan-Rocha S."/>
            <person name="Miner G."/>
            <person name="Morgan M."/>
            <person name="Hawes A."/>
            <person name="Gill R."/>
            <person name="Holt R.A."/>
            <person name="Adams M.D."/>
            <person name="Amanatides P.G."/>
            <person name="Baden-Tillson H."/>
            <person name="Barnstead M."/>
            <person name="Chin S."/>
            <person name="Evans C.A."/>
            <person name="Ferriera S."/>
            <person name="Fosler C."/>
            <person name="Glodek A."/>
            <person name="Gu Z."/>
            <person name="Jennings D."/>
            <person name="Kraft C.L."/>
            <person name="Nguyen T."/>
            <person name="Pfannkoch C.M."/>
            <person name="Sitter C."/>
            <person name="Sutton G.G."/>
            <person name="Venter J.C."/>
            <person name="Woodage T."/>
            <person name="Smith D."/>
            <person name="Lee H.-M."/>
            <person name="Gustafson E."/>
            <person name="Cahill P."/>
            <person name="Kana A."/>
            <person name="Doucette-Stamm L."/>
            <person name="Weinstock K."/>
            <person name="Fechtel K."/>
            <person name="Weiss R.B."/>
            <person name="Dunn D.M."/>
            <person name="Green E.D."/>
            <person name="Blakesley R.W."/>
            <person name="Bouffard G.G."/>
            <person name="De Jong P.J."/>
            <person name="Osoegawa K."/>
            <person name="Zhu B."/>
            <person name="Marra M."/>
            <person name="Schein J."/>
            <person name="Bosdet I."/>
            <person name="Fjell C."/>
            <person name="Jones S."/>
            <person name="Krzywinski M."/>
            <person name="Mathewson C."/>
            <person name="Siddiqui A."/>
            <person name="Wye N."/>
            <person name="McPherson J."/>
            <person name="Zhao S."/>
            <person name="Fraser C.M."/>
            <person name="Shetty J."/>
            <person name="Shatsman S."/>
            <person name="Geer K."/>
            <person name="Chen Y."/>
            <person name="Abramzon S."/>
            <person name="Nierman W.C."/>
            <person name="Havlak P.H."/>
            <person name="Chen R."/>
            <person name="Durbin K.J."/>
            <person name="Egan A."/>
            <person name="Ren Y."/>
            <person name="Song X.-Z."/>
            <person name="Li B."/>
            <person name="Liu Y."/>
            <person name="Qin X."/>
            <person name="Cawley S."/>
            <person name="Cooney A.J."/>
            <person name="D'Souza L.M."/>
            <person name="Martin K."/>
            <person name="Wu J.Q."/>
            <person name="Gonzalez-Garay M.L."/>
            <person name="Jackson A.R."/>
            <person name="Kalafus K.J."/>
            <person name="McLeod M.P."/>
            <person name="Milosavljevic A."/>
            <person name="Virk D."/>
            <person name="Volkov A."/>
            <person name="Wheeler D.A."/>
            <person name="Zhang Z."/>
            <person name="Bailey J.A."/>
            <person name="Eichler E.E."/>
            <person name="Tuzun E."/>
            <person name="Birney E."/>
            <person name="Mongin E."/>
            <person name="Ureta-Vidal A."/>
            <person name="Woodwark C."/>
            <person name="Zdobnov E."/>
            <person name="Bork P."/>
            <person name="Suyama M."/>
            <person name="Torrents D."/>
            <person name="Alexandersson M."/>
            <person name="Trask B.J."/>
            <person name="Young J.M."/>
            <person name="Huang H."/>
            <person name="Wang H."/>
            <person name="Xing H."/>
            <person name="Daniels S."/>
            <person name="Gietzen D."/>
            <person name="Schmidt J."/>
            <person name="Stevens K."/>
            <person name="Vitt U."/>
            <person name="Wingrove J."/>
            <person name="Camara F."/>
            <person name="Mar Alba M."/>
            <person name="Abril J.F."/>
            <person name="Guigo R."/>
            <person name="Smit A."/>
            <person name="Dubchak I."/>
            <person name="Rubin E.M."/>
            <person name="Couronne O."/>
            <person name="Poliakov A."/>
            <person name="Huebner N."/>
            <person name="Ganten D."/>
            <person name="Goesele C."/>
            <person name="Hummel O."/>
            <person name="Kreitler T."/>
            <person name="Lee Y.-A."/>
            <person name="Monti J."/>
            <person name="Schulz H."/>
            <person name="Zimdahl H."/>
            <person name="Himmelbauer H."/>
            <person name="Lehrach H."/>
            <person name="Jacob H.J."/>
            <person name="Bromberg S."/>
            <person name="Gullings-Handley J."/>
            <person name="Jensen-Seaman M.I."/>
            <person name="Kwitek A.E."/>
            <person name="Lazar J."/>
            <person name="Pasko D."/>
            <person name="Tonellato P.J."/>
            <person name="Twigger S."/>
            <person name="Ponting C.P."/>
            <person name="Duarte J.M."/>
            <person name="Rice S."/>
            <person name="Goodstadt L."/>
            <person name="Beatson S.A."/>
            <person name="Emes R.D."/>
            <person name="Winter E.E."/>
            <person name="Webber C."/>
            <person name="Brandt P."/>
            <person name="Nyakatura G."/>
            <person name="Adetobi M."/>
            <person name="Chiaromonte F."/>
            <person name="Elnitski L."/>
            <person name="Eswara P."/>
            <person name="Hardison R.C."/>
            <person name="Hou M."/>
            <person name="Kolbe D."/>
            <person name="Makova K."/>
            <person name="Miller W."/>
            <person name="Nekrutenko A."/>
            <person name="Riemer C."/>
            <person name="Schwartz S."/>
            <person name="Taylor J."/>
            <person name="Yang S."/>
            <person name="Zhang Y."/>
            <person name="Lindpaintner K."/>
            <person name="Andrews T.D."/>
            <person name="Caccamo M."/>
            <person name="Clamp M."/>
            <person name="Clarke L."/>
            <person name="Curwen V."/>
            <person name="Durbin R.M."/>
            <person name="Eyras E."/>
            <person name="Searle S.M."/>
            <person name="Cooper G.M."/>
            <person name="Batzoglou S."/>
            <person name="Brudno M."/>
            <person name="Sidow A."/>
            <person name="Stone E.A."/>
            <person name="Payseur B.A."/>
            <person name="Bourque G."/>
            <person name="Lopez-Otin C."/>
            <person name="Puente X.S."/>
            <person name="Chakrabarti K."/>
            <person name="Chatterji S."/>
            <person name="Dewey C."/>
            <person name="Pachter L."/>
            <person name="Bray N."/>
            <person name="Yap V.B."/>
            <person name="Caspi A."/>
            <person name="Tesler G."/>
            <person name="Pevzner P.A."/>
            <person name="Haussler D."/>
            <person name="Roskin K.M."/>
            <person name="Baertsch R."/>
            <person name="Clawson H."/>
            <person name="Furey T.S."/>
            <person name="Hinrichs A.S."/>
            <person name="Karolchik D."/>
            <person name="Kent W.J."/>
            <person name="Rosenbloom K.R."/>
            <person name="Trumbower H."/>
            <person name="Weirauch M."/>
            <person name="Cooper D.N."/>
            <person name="Stenson P.D."/>
            <person name="Ma B."/>
            <person name="Brent M."/>
            <person name="Arumugam M."/>
            <person name="Shteynberg D."/>
            <person name="Copley R.R."/>
            <person name="Taylor M.S."/>
            <person name="Riethman H."/>
            <person name="Mudunuri U."/>
            <person name="Peterson J."/>
            <person name="Guyer M."/>
            <person name="Felsenfeld A."/>
            <person name="Old S."/>
            <person name="Mockrin S."/>
            <person name="Collins F.S."/>
        </authorList>
    </citation>
    <scope>NUCLEOTIDE SEQUENCE [LARGE SCALE GENOMIC DNA]</scope>
    <source>
        <strain>Brown Norway</strain>
    </source>
</reference>
<reference key="2">
    <citation type="journal article" date="1998" name="Genomics">
        <title>Identification of high-molecular-weight proteins with multiple EGF-like motifs by motif-trap screening.</title>
        <authorList>
            <person name="Nakayama M."/>
            <person name="Nakajima D."/>
            <person name="Nagase T."/>
            <person name="Nomura N."/>
            <person name="Seki N."/>
            <person name="Ohara O."/>
        </authorList>
    </citation>
    <scope>NUCLEOTIDE SEQUENCE [MRNA] OF 1915-2788</scope>
    <scope>TISSUE SPECIFICITY</scope>
    <source>
        <strain>Sprague-Dawley</strain>
        <tissue>Brain</tissue>
    </source>
</reference>
<reference key="3">
    <citation type="journal article" date="2006" name="Proc. Natl. Acad. Sci. U.S.A.">
        <title>Quantitative phosphoproteomics of vasopressin-sensitive renal cells: regulation of aquaporin-2 phosphorylation at two sites.</title>
        <authorList>
            <person name="Hoffert J.D."/>
            <person name="Pisitkun T."/>
            <person name="Wang G."/>
            <person name="Shen R.-F."/>
            <person name="Knepper M.A."/>
        </authorList>
    </citation>
    <scope>PHOSPHORYLATION [LARGE SCALE ANALYSIS] AT THR-1353</scope>
    <scope>IDENTIFICATION BY MASS SPECTROMETRY [LARGE SCALE ANALYSIS]</scope>
</reference>
<accession>Q9QYP0</accession>
<dbReference type="EMBL" id="AABR03001918">
    <property type="status" value="NOT_ANNOTATED_CDS"/>
    <property type="molecule type" value="Genomic_DNA"/>
</dbReference>
<dbReference type="EMBL" id="AABR03001941">
    <property type="status" value="NOT_ANNOTATED_CDS"/>
    <property type="molecule type" value="Genomic_DNA"/>
</dbReference>
<dbReference type="EMBL" id="AABR03004237">
    <property type="status" value="NOT_ANNOTATED_CDS"/>
    <property type="molecule type" value="Genomic_DNA"/>
</dbReference>
<dbReference type="EMBL" id="AB011534">
    <property type="protein sequence ID" value="BAA88689.1"/>
    <property type="molecule type" value="mRNA"/>
</dbReference>
<dbReference type="SMR" id="Q9QYP0"/>
<dbReference type="FunCoup" id="Q9QYP0">
    <property type="interactions" value="1731"/>
</dbReference>
<dbReference type="IntAct" id="Q9QYP0">
    <property type="interactions" value="1"/>
</dbReference>
<dbReference type="STRING" id="10116.ENSRNOP00000074834"/>
<dbReference type="GlyCosmos" id="Q9QYP0">
    <property type="glycosylation" value="6 sites, No reported glycans"/>
</dbReference>
<dbReference type="GlyGen" id="Q9QYP0">
    <property type="glycosylation" value="9 sites"/>
</dbReference>
<dbReference type="iPTMnet" id="Q9QYP0"/>
<dbReference type="PhosphoSitePlus" id="Q9QYP0"/>
<dbReference type="PaxDb" id="10116-ENSRNOP00000027831"/>
<dbReference type="UCSC" id="RGD:621190">
    <property type="organism name" value="rat"/>
</dbReference>
<dbReference type="AGR" id="RGD:621190"/>
<dbReference type="RGD" id="621190">
    <property type="gene designation" value="Megf8"/>
</dbReference>
<dbReference type="eggNOG" id="KOG1388">
    <property type="taxonomic scope" value="Eukaryota"/>
</dbReference>
<dbReference type="InParanoid" id="Q9QYP0"/>
<dbReference type="PhylomeDB" id="Q9QYP0"/>
<dbReference type="TreeFam" id="TF321873"/>
<dbReference type="PRO" id="PR:Q9QYP0"/>
<dbReference type="Proteomes" id="UP000002494">
    <property type="component" value="Unplaced"/>
</dbReference>
<dbReference type="GO" id="GO:0005604">
    <property type="term" value="C:basement membrane"/>
    <property type="evidence" value="ECO:0000318"/>
    <property type="project" value="GO_Central"/>
</dbReference>
<dbReference type="GO" id="GO:0005634">
    <property type="term" value="C:nucleus"/>
    <property type="evidence" value="ECO:0000250"/>
    <property type="project" value="UniProtKB"/>
</dbReference>
<dbReference type="GO" id="GO:0000151">
    <property type="term" value="C:ubiquitin ligase complex"/>
    <property type="evidence" value="ECO:0000266"/>
    <property type="project" value="RGD"/>
</dbReference>
<dbReference type="GO" id="GO:0005509">
    <property type="term" value="F:calcium ion binding"/>
    <property type="evidence" value="ECO:0007669"/>
    <property type="project" value="InterPro"/>
</dbReference>
<dbReference type="GO" id="GO:0009887">
    <property type="term" value="P:animal organ morphogenesis"/>
    <property type="evidence" value="ECO:0000318"/>
    <property type="project" value="GO_Central"/>
</dbReference>
<dbReference type="GO" id="GO:0035904">
    <property type="term" value="P:aorta development"/>
    <property type="evidence" value="ECO:0000266"/>
    <property type="project" value="RGD"/>
</dbReference>
<dbReference type="GO" id="GO:0007411">
    <property type="term" value="P:axon guidance"/>
    <property type="evidence" value="ECO:0000318"/>
    <property type="project" value="GO_Central"/>
</dbReference>
<dbReference type="GO" id="GO:0030509">
    <property type="term" value="P:BMP signaling pathway"/>
    <property type="evidence" value="ECO:0000250"/>
    <property type="project" value="CAFA"/>
</dbReference>
<dbReference type="GO" id="GO:0042074">
    <property type="term" value="P:cell migration involved in gastrulation"/>
    <property type="evidence" value="ECO:0000266"/>
    <property type="project" value="RGD"/>
</dbReference>
<dbReference type="GO" id="GO:0060976">
    <property type="term" value="P:coronary vasculature development"/>
    <property type="evidence" value="ECO:0000266"/>
    <property type="project" value="RGD"/>
</dbReference>
<dbReference type="GO" id="GO:0097094">
    <property type="term" value="P:craniofacial suture morphogenesis"/>
    <property type="evidence" value="ECO:0000266"/>
    <property type="project" value="RGD"/>
</dbReference>
<dbReference type="GO" id="GO:0071907">
    <property type="term" value="P:determination of digestive tract left/right asymmetry"/>
    <property type="evidence" value="ECO:0000250"/>
    <property type="project" value="UniProtKB"/>
</dbReference>
<dbReference type="GO" id="GO:0061371">
    <property type="term" value="P:determination of heart left/right asymmetry"/>
    <property type="evidence" value="ECO:0000250"/>
    <property type="project" value="UniProtKB"/>
</dbReference>
<dbReference type="GO" id="GO:0007368">
    <property type="term" value="P:determination of left/right symmetry"/>
    <property type="evidence" value="ECO:0000266"/>
    <property type="project" value="RGD"/>
</dbReference>
<dbReference type="GO" id="GO:1990403">
    <property type="term" value="P:embryonic brain development"/>
    <property type="evidence" value="ECO:0000266"/>
    <property type="project" value="RGD"/>
</dbReference>
<dbReference type="GO" id="GO:0042733">
    <property type="term" value="P:embryonic digit morphogenesis"/>
    <property type="evidence" value="ECO:0000266"/>
    <property type="project" value="RGD"/>
</dbReference>
<dbReference type="GO" id="GO:0060971">
    <property type="term" value="P:embryonic heart tube left/right pattern formation"/>
    <property type="evidence" value="ECO:0000250"/>
    <property type="project" value="CAFA"/>
</dbReference>
<dbReference type="GO" id="GO:0003143">
    <property type="term" value="P:embryonic heart tube morphogenesis"/>
    <property type="evidence" value="ECO:0000250"/>
    <property type="project" value="CAFA"/>
</dbReference>
<dbReference type="GO" id="GO:0030326">
    <property type="term" value="P:embryonic limb morphogenesis"/>
    <property type="evidence" value="ECO:0000250"/>
    <property type="project" value="CAFA"/>
</dbReference>
<dbReference type="GO" id="GO:0048704">
    <property type="term" value="P:embryonic skeletal system morphogenesis"/>
    <property type="evidence" value="ECO:0000250"/>
    <property type="project" value="CAFA"/>
</dbReference>
<dbReference type="GO" id="GO:0055113">
    <property type="term" value="P:epiboly involved in gastrulation with mouth forming second"/>
    <property type="evidence" value="ECO:0000266"/>
    <property type="project" value="RGD"/>
</dbReference>
<dbReference type="GO" id="GO:0097155">
    <property type="term" value="P:fasciculation of sensory neuron axon"/>
    <property type="evidence" value="ECO:0000250"/>
    <property type="project" value="CAFA"/>
</dbReference>
<dbReference type="GO" id="GO:0007507">
    <property type="term" value="P:heart development"/>
    <property type="evidence" value="ECO:0000266"/>
    <property type="project" value="RGD"/>
</dbReference>
<dbReference type="GO" id="GO:0060972">
    <property type="term" value="P:left/right pattern formation"/>
    <property type="evidence" value="ECO:0000250"/>
    <property type="project" value="CAFA"/>
</dbReference>
<dbReference type="GO" id="GO:0060173">
    <property type="term" value="P:limb development"/>
    <property type="evidence" value="ECO:0000266"/>
    <property type="project" value="RGD"/>
</dbReference>
<dbReference type="GO" id="GO:0035108">
    <property type="term" value="P:limb morphogenesis"/>
    <property type="evidence" value="ECO:0000266"/>
    <property type="project" value="RGD"/>
</dbReference>
<dbReference type="GO" id="GO:0045879">
    <property type="term" value="P:negative regulation of smoothened signaling pathway"/>
    <property type="evidence" value="ECO:0000250"/>
    <property type="project" value="UniProtKB"/>
</dbReference>
<dbReference type="GO" id="GO:0061626">
    <property type="term" value="P:pharyngeal arch artery morphogenesis"/>
    <property type="evidence" value="ECO:0000266"/>
    <property type="project" value="RGD"/>
</dbReference>
<dbReference type="GO" id="GO:0048842">
    <property type="term" value="P:positive regulation of axon extension involved in axon guidance"/>
    <property type="evidence" value="ECO:0000250"/>
    <property type="project" value="CAFA"/>
</dbReference>
<dbReference type="GO" id="GO:0016567">
    <property type="term" value="P:protein ubiquitination"/>
    <property type="evidence" value="ECO:0000266"/>
    <property type="project" value="RGD"/>
</dbReference>
<dbReference type="GO" id="GO:0065003">
    <property type="term" value="P:protein-containing complex assembly"/>
    <property type="evidence" value="ECO:0000266"/>
    <property type="project" value="RGD"/>
</dbReference>
<dbReference type="GO" id="GO:0010468">
    <property type="term" value="P:regulation of gene expression"/>
    <property type="evidence" value="ECO:0000250"/>
    <property type="project" value="CAFA"/>
</dbReference>
<dbReference type="GO" id="GO:0007224">
    <property type="term" value="P:smoothened signaling pathway"/>
    <property type="evidence" value="ECO:0000266"/>
    <property type="project" value="RGD"/>
</dbReference>
<dbReference type="GO" id="GO:0009888">
    <property type="term" value="P:tissue development"/>
    <property type="evidence" value="ECO:0000318"/>
    <property type="project" value="GO_Central"/>
</dbReference>
<dbReference type="CDD" id="cd00041">
    <property type="entry name" value="CUB"/>
    <property type="match status" value="1"/>
</dbReference>
<dbReference type="CDD" id="cd00054">
    <property type="entry name" value="EGF_CA"/>
    <property type="match status" value="2"/>
</dbReference>
<dbReference type="CDD" id="cd00055">
    <property type="entry name" value="EGF_Lam"/>
    <property type="match status" value="2"/>
</dbReference>
<dbReference type="FunFam" id="2.10.25.10:FF:000191">
    <property type="entry name" value="Multiple epidermal growth factor-like domains 8"/>
    <property type="match status" value="1"/>
</dbReference>
<dbReference type="FunFam" id="2.10.25.10:FF:000202">
    <property type="entry name" value="Multiple epidermal growth factor-like domains 8"/>
    <property type="match status" value="1"/>
</dbReference>
<dbReference type="FunFam" id="2.10.25.10:FF:000207">
    <property type="entry name" value="Multiple epidermal growth factor-like domains 8"/>
    <property type="match status" value="1"/>
</dbReference>
<dbReference type="FunFam" id="2.10.25.10:FF:000214">
    <property type="entry name" value="Multiple epidermal growth factor-like domains 8"/>
    <property type="match status" value="1"/>
</dbReference>
<dbReference type="FunFam" id="2.10.25.10:FF:000331">
    <property type="entry name" value="Multiple epidermal growth factor-like domains 8"/>
    <property type="match status" value="1"/>
</dbReference>
<dbReference type="FunFam" id="2.10.25.10:FF:000532">
    <property type="entry name" value="Multiple epidermal growth factor-like domains 8"/>
    <property type="match status" value="1"/>
</dbReference>
<dbReference type="FunFam" id="2.120.10.80:FF:000030">
    <property type="entry name" value="Multiple epidermal growth factor-like domains 8"/>
    <property type="match status" value="1"/>
</dbReference>
<dbReference type="FunFam" id="2.120.10.80:FF:000033">
    <property type="entry name" value="Multiple epidermal growth factor-like domains 8"/>
    <property type="match status" value="1"/>
</dbReference>
<dbReference type="FunFam" id="2.60.120.290:FF:000023">
    <property type="entry name" value="Multiple epidermal growth factor-like domains 8"/>
    <property type="match status" value="1"/>
</dbReference>
<dbReference type="FunFam" id="2.120.10.80:FF:000051">
    <property type="entry name" value="Multiple epidermal growth factor-like domains protein 8"/>
    <property type="match status" value="1"/>
</dbReference>
<dbReference type="FunFam" id="2.120.10.80:FF:000069">
    <property type="entry name" value="Multiple epidermal growth factor-like domains protein 8"/>
    <property type="match status" value="1"/>
</dbReference>
<dbReference type="Gene3D" id="2.120.10.80">
    <property type="entry name" value="Kelch-type beta propeller"/>
    <property type="match status" value="4"/>
</dbReference>
<dbReference type="Gene3D" id="2.10.25.10">
    <property type="entry name" value="Laminin"/>
    <property type="match status" value="8"/>
</dbReference>
<dbReference type="Gene3D" id="2.60.120.290">
    <property type="entry name" value="Spermadhesin, CUB domain"/>
    <property type="match status" value="1"/>
</dbReference>
<dbReference type="InterPro" id="IPR056737">
    <property type="entry name" value="Beta-prop_ATRN-MKLN-like"/>
</dbReference>
<dbReference type="InterPro" id="IPR000859">
    <property type="entry name" value="CUB_dom"/>
</dbReference>
<dbReference type="InterPro" id="IPR001881">
    <property type="entry name" value="EGF-like_Ca-bd_dom"/>
</dbReference>
<dbReference type="InterPro" id="IPR000742">
    <property type="entry name" value="EGF-like_dom"/>
</dbReference>
<dbReference type="InterPro" id="IPR000152">
    <property type="entry name" value="EGF-type_Asp/Asn_hydroxyl_site"/>
</dbReference>
<dbReference type="InterPro" id="IPR018097">
    <property type="entry name" value="EGF_Ca-bd_CS"/>
</dbReference>
<dbReference type="InterPro" id="IPR024731">
    <property type="entry name" value="EGF_dom"/>
</dbReference>
<dbReference type="InterPro" id="IPR015915">
    <property type="entry name" value="Kelch-typ_b-propeller"/>
</dbReference>
<dbReference type="InterPro" id="IPR002049">
    <property type="entry name" value="LE_dom"/>
</dbReference>
<dbReference type="InterPro" id="IPR056863">
    <property type="entry name" value="LMN_ATRN_NET-like_EGF"/>
</dbReference>
<dbReference type="InterPro" id="IPR049883">
    <property type="entry name" value="NOTCH1_EGF-like"/>
</dbReference>
<dbReference type="InterPro" id="IPR002165">
    <property type="entry name" value="Plexin_repeat"/>
</dbReference>
<dbReference type="InterPro" id="IPR016201">
    <property type="entry name" value="PSI"/>
</dbReference>
<dbReference type="InterPro" id="IPR035914">
    <property type="entry name" value="Sperma_CUB_dom_sf"/>
</dbReference>
<dbReference type="PANTHER" id="PTHR46093">
    <property type="entry name" value="ACYL-COA-BINDING DOMAIN-CONTAINING PROTEIN 5"/>
    <property type="match status" value="1"/>
</dbReference>
<dbReference type="PANTHER" id="PTHR46093:SF18">
    <property type="entry name" value="FIBRONECTIN TYPE-III DOMAIN-CONTAINING PROTEIN"/>
    <property type="match status" value="1"/>
</dbReference>
<dbReference type="Pfam" id="PF24981">
    <property type="entry name" value="Beta-prop_ATRN-LZTR1"/>
    <property type="match status" value="2"/>
</dbReference>
<dbReference type="Pfam" id="PF00431">
    <property type="entry name" value="CUB"/>
    <property type="match status" value="1"/>
</dbReference>
<dbReference type="Pfam" id="PF12947">
    <property type="entry name" value="EGF_3"/>
    <property type="match status" value="1"/>
</dbReference>
<dbReference type="Pfam" id="PF07645">
    <property type="entry name" value="EGF_CA"/>
    <property type="match status" value="1"/>
</dbReference>
<dbReference type="Pfam" id="PF00053">
    <property type="entry name" value="EGF_laminin"/>
    <property type="match status" value="1"/>
</dbReference>
<dbReference type="Pfam" id="PF24973">
    <property type="entry name" value="EGF_LMN_ATRN"/>
    <property type="match status" value="3"/>
</dbReference>
<dbReference type="Pfam" id="PF23106">
    <property type="entry name" value="EGF_Teneurin"/>
    <property type="match status" value="1"/>
</dbReference>
<dbReference type="Pfam" id="PF01437">
    <property type="entry name" value="PSI"/>
    <property type="match status" value="1"/>
</dbReference>
<dbReference type="PRINTS" id="PR00011">
    <property type="entry name" value="EGFLAMININ"/>
</dbReference>
<dbReference type="SMART" id="SM00042">
    <property type="entry name" value="CUB"/>
    <property type="match status" value="1"/>
</dbReference>
<dbReference type="SMART" id="SM00181">
    <property type="entry name" value="EGF"/>
    <property type="match status" value="13"/>
</dbReference>
<dbReference type="SMART" id="SM00179">
    <property type="entry name" value="EGF_CA"/>
    <property type="match status" value="2"/>
</dbReference>
<dbReference type="SMART" id="SM00180">
    <property type="entry name" value="EGF_Lam"/>
    <property type="match status" value="4"/>
</dbReference>
<dbReference type="SMART" id="SM00423">
    <property type="entry name" value="PSI"/>
    <property type="match status" value="9"/>
</dbReference>
<dbReference type="SUPFAM" id="SSF57196">
    <property type="entry name" value="EGF/Laminin"/>
    <property type="match status" value="4"/>
</dbReference>
<dbReference type="SUPFAM" id="SSF117281">
    <property type="entry name" value="Kelch motif"/>
    <property type="match status" value="2"/>
</dbReference>
<dbReference type="SUPFAM" id="SSF49854">
    <property type="entry name" value="Spermadhesin, CUB domain"/>
    <property type="match status" value="1"/>
</dbReference>
<dbReference type="PROSITE" id="PS00010">
    <property type="entry name" value="ASX_HYDROXYL"/>
    <property type="match status" value="2"/>
</dbReference>
<dbReference type="PROSITE" id="PS01180">
    <property type="entry name" value="CUB"/>
    <property type="match status" value="2"/>
</dbReference>
<dbReference type="PROSITE" id="PS00022">
    <property type="entry name" value="EGF_1"/>
    <property type="match status" value="6"/>
</dbReference>
<dbReference type="PROSITE" id="PS01186">
    <property type="entry name" value="EGF_2"/>
    <property type="match status" value="7"/>
</dbReference>
<dbReference type="PROSITE" id="PS50026">
    <property type="entry name" value="EGF_3"/>
    <property type="match status" value="5"/>
</dbReference>
<dbReference type="PROSITE" id="PS01187">
    <property type="entry name" value="EGF_CA"/>
    <property type="match status" value="1"/>
</dbReference>
<dbReference type="PROSITE" id="PS01248">
    <property type="entry name" value="EGF_LAM_1"/>
    <property type="match status" value="4"/>
</dbReference>
<dbReference type="PROSITE" id="PS50027">
    <property type="entry name" value="EGF_LAM_2"/>
    <property type="match status" value="3"/>
</dbReference>
<keyword id="KW-0106">Calcium</keyword>
<keyword id="KW-1015">Disulfide bond</keyword>
<keyword id="KW-0245">EGF-like domain</keyword>
<keyword id="KW-0325">Glycoprotein</keyword>
<keyword id="KW-0880">Kelch repeat</keyword>
<keyword id="KW-0424">Laminin EGF-like domain</keyword>
<keyword id="KW-0472">Membrane</keyword>
<keyword id="KW-0597">Phosphoprotein</keyword>
<keyword id="KW-1185">Reference proteome</keyword>
<keyword id="KW-0677">Repeat</keyword>
<keyword id="KW-0732">Signal</keyword>
<keyword id="KW-0812">Transmembrane</keyword>
<keyword id="KW-1133">Transmembrane helix</keyword>
<organism>
    <name type="scientific">Rattus norvegicus</name>
    <name type="common">Rat</name>
    <dbReference type="NCBI Taxonomy" id="10116"/>
    <lineage>
        <taxon>Eukaryota</taxon>
        <taxon>Metazoa</taxon>
        <taxon>Chordata</taxon>
        <taxon>Craniata</taxon>
        <taxon>Vertebrata</taxon>
        <taxon>Euteleostomi</taxon>
        <taxon>Mammalia</taxon>
        <taxon>Eutheria</taxon>
        <taxon>Euarchontoglires</taxon>
        <taxon>Glires</taxon>
        <taxon>Rodentia</taxon>
        <taxon>Myomorpha</taxon>
        <taxon>Muroidea</taxon>
        <taxon>Muridae</taxon>
        <taxon>Murinae</taxon>
        <taxon>Rattus</taxon>
    </lineage>
</organism>
<protein>
    <recommendedName>
        <fullName>Multiple epidermal growth factor-like domains protein 8</fullName>
        <shortName>Multiple EGF-like domains protein 8</shortName>
    </recommendedName>
    <alternativeName>
        <fullName>Epidermal growth factor-like protein 4</fullName>
        <shortName>EGF-like protein 4</shortName>
    </alternativeName>
</protein>
<proteinExistence type="evidence at protein level"/>
<comment type="function">
    <text evidence="2">Acts as a negative regulator of hedgehog signaling.</text>
</comment>
<comment type="subcellular location">
    <subcellularLocation>
        <location evidence="9">Membrane</location>
        <topology evidence="9">Single-pass type I membrane protein</topology>
    </subcellularLocation>
</comment>
<comment type="tissue specificity">
    <text evidence="8">Expressed in brain.</text>
</comment>
<evidence type="ECO:0000250" key="1"/>
<evidence type="ECO:0000250" key="2">
    <source>
        <dbReference type="UniProtKB" id="P60882"/>
    </source>
</evidence>
<evidence type="ECO:0000255" key="3"/>
<evidence type="ECO:0000255" key="4">
    <source>
        <dbReference type="PROSITE-ProRule" id="PRU00059"/>
    </source>
</evidence>
<evidence type="ECO:0000255" key="5">
    <source>
        <dbReference type="PROSITE-ProRule" id="PRU00076"/>
    </source>
</evidence>
<evidence type="ECO:0000255" key="6">
    <source>
        <dbReference type="PROSITE-ProRule" id="PRU00460"/>
    </source>
</evidence>
<evidence type="ECO:0000256" key="7">
    <source>
        <dbReference type="SAM" id="MobiDB-lite"/>
    </source>
</evidence>
<evidence type="ECO:0000269" key="8">
    <source>
    </source>
</evidence>
<evidence type="ECO:0000305" key="9"/>
<evidence type="ECO:0007744" key="10">
    <source>
    </source>
</evidence>
<gene>
    <name type="primary">Megf8</name>
    <name type="synonym">Egfl4</name>
</gene>
<name>MEGF8_RAT</name>